<accession>Q0T4X1</accession>
<evidence type="ECO:0000255" key="1">
    <source>
        <dbReference type="HAMAP-Rule" id="MF_00625"/>
    </source>
</evidence>
<name>SELD_SHIF8</name>
<keyword id="KW-0067">ATP-binding</keyword>
<keyword id="KW-0418">Kinase</keyword>
<keyword id="KW-0460">Magnesium</keyword>
<keyword id="KW-0479">Metal-binding</keyword>
<keyword id="KW-0547">Nucleotide-binding</keyword>
<keyword id="KW-0711">Selenium</keyword>
<keyword id="KW-0808">Transferase</keyword>
<sequence>MSENSIRLTQYSHGAGCGCKISPKVLETILHSEQAKFVDPNLLVGNETRDDAAVYDLGNGTSVISTTDFFMPIVDNPFDFGRIAATNAISDIFAMGGKPIMAIAILGWPINKLSPEIAREVTEGGRYACRQAGIALAGGHSIDAPEPIFGLAVTGIVPTERVKKNSTAQAGCKLFLTKPLGIGVLTTAEKKSLLKPEHQGLATEVMCRMNIAGASFANIEGVKAMTDVTGFGLLGHLSEMCQGAGVQARVDYEAIPKLPGVEEYIKLGAVPGGTERNFASYGHLMGEMPREVRDLLCDPQTSGGLLLAVMPEAENEVKTTAAEFGIELTAIGELVPARGGRAMVEIR</sequence>
<comment type="function">
    <text evidence="1">Synthesizes selenophosphate from selenide and ATP.</text>
</comment>
<comment type="catalytic activity">
    <reaction evidence="1">
        <text>hydrogenselenide + ATP + H2O = selenophosphate + AMP + phosphate + 2 H(+)</text>
        <dbReference type="Rhea" id="RHEA:18737"/>
        <dbReference type="ChEBI" id="CHEBI:15377"/>
        <dbReference type="ChEBI" id="CHEBI:15378"/>
        <dbReference type="ChEBI" id="CHEBI:16144"/>
        <dbReference type="ChEBI" id="CHEBI:29317"/>
        <dbReference type="ChEBI" id="CHEBI:30616"/>
        <dbReference type="ChEBI" id="CHEBI:43474"/>
        <dbReference type="ChEBI" id="CHEBI:456215"/>
        <dbReference type="EC" id="2.7.9.3"/>
    </reaction>
</comment>
<comment type="cofactor">
    <cofactor evidence="1">
        <name>Mg(2+)</name>
        <dbReference type="ChEBI" id="CHEBI:18420"/>
    </cofactor>
    <text evidence="1">Binds 1 Mg(2+) ion per monomer.</text>
</comment>
<comment type="subunit">
    <text evidence="1">Homodimer.</text>
</comment>
<comment type="similarity">
    <text evidence="1">Belongs to the selenophosphate synthase 1 family. Class I subfamily.</text>
</comment>
<organism>
    <name type="scientific">Shigella flexneri serotype 5b (strain 8401)</name>
    <dbReference type="NCBI Taxonomy" id="373384"/>
    <lineage>
        <taxon>Bacteria</taxon>
        <taxon>Pseudomonadati</taxon>
        <taxon>Pseudomonadota</taxon>
        <taxon>Gammaproteobacteria</taxon>
        <taxon>Enterobacterales</taxon>
        <taxon>Enterobacteriaceae</taxon>
        <taxon>Shigella</taxon>
    </lineage>
</organism>
<protein>
    <recommendedName>
        <fullName evidence="1">Selenide, water dikinase</fullName>
        <ecNumber evidence="1">2.7.9.3</ecNumber>
    </recommendedName>
    <alternativeName>
        <fullName evidence="1">Selenium donor protein</fullName>
    </alternativeName>
    <alternativeName>
        <fullName evidence="1">Selenophosphate synthase</fullName>
    </alternativeName>
</protein>
<dbReference type="EC" id="2.7.9.3" evidence="1"/>
<dbReference type="EMBL" id="CP000266">
    <property type="protein sequence ID" value="ABF03644.1"/>
    <property type="molecule type" value="Genomic_DNA"/>
</dbReference>
<dbReference type="RefSeq" id="WP_001370476.1">
    <property type="nucleotide sequence ID" value="NC_008258.1"/>
</dbReference>
<dbReference type="SMR" id="Q0T4X1"/>
<dbReference type="KEGG" id="sfv:SFV_1453"/>
<dbReference type="HOGENOM" id="CLU_032859_0_1_6"/>
<dbReference type="Proteomes" id="UP000000659">
    <property type="component" value="Chromosome"/>
</dbReference>
<dbReference type="GO" id="GO:0005737">
    <property type="term" value="C:cytoplasm"/>
    <property type="evidence" value="ECO:0007669"/>
    <property type="project" value="TreeGrafter"/>
</dbReference>
<dbReference type="GO" id="GO:0005524">
    <property type="term" value="F:ATP binding"/>
    <property type="evidence" value="ECO:0007669"/>
    <property type="project" value="UniProtKB-UniRule"/>
</dbReference>
<dbReference type="GO" id="GO:0000287">
    <property type="term" value="F:magnesium ion binding"/>
    <property type="evidence" value="ECO:0007669"/>
    <property type="project" value="UniProtKB-UniRule"/>
</dbReference>
<dbReference type="GO" id="GO:0004756">
    <property type="term" value="F:selenide, water dikinase activity"/>
    <property type="evidence" value="ECO:0007669"/>
    <property type="project" value="UniProtKB-UniRule"/>
</dbReference>
<dbReference type="GO" id="GO:0016260">
    <property type="term" value="P:selenocysteine biosynthetic process"/>
    <property type="evidence" value="ECO:0007669"/>
    <property type="project" value="InterPro"/>
</dbReference>
<dbReference type="CDD" id="cd02195">
    <property type="entry name" value="SelD"/>
    <property type="match status" value="1"/>
</dbReference>
<dbReference type="FunFam" id="3.30.1330.10:FF:000003">
    <property type="entry name" value="Selenide, water dikinase"/>
    <property type="match status" value="1"/>
</dbReference>
<dbReference type="FunFam" id="3.90.650.10:FF:000004">
    <property type="entry name" value="Selenide, water dikinase"/>
    <property type="match status" value="1"/>
</dbReference>
<dbReference type="Gene3D" id="3.90.650.10">
    <property type="entry name" value="PurM-like C-terminal domain"/>
    <property type="match status" value="1"/>
</dbReference>
<dbReference type="Gene3D" id="3.30.1330.10">
    <property type="entry name" value="PurM-like, N-terminal domain"/>
    <property type="match status" value="1"/>
</dbReference>
<dbReference type="HAMAP" id="MF_00625">
    <property type="entry name" value="SelD"/>
    <property type="match status" value="1"/>
</dbReference>
<dbReference type="InterPro" id="IPR010918">
    <property type="entry name" value="PurM-like_C_dom"/>
</dbReference>
<dbReference type="InterPro" id="IPR036676">
    <property type="entry name" value="PurM-like_C_sf"/>
</dbReference>
<dbReference type="InterPro" id="IPR016188">
    <property type="entry name" value="PurM-like_N"/>
</dbReference>
<dbReference type="InterPro" id="IPR036921">
    <property type="entry name" value="PurM-like_N_sf"/>
</dbReference>
<dbReference type="InterPro" id="IPR023061">
    <property type="entry name" value="SelD_I"/>
</dbReference>
<dbReference type="InterPro" id="IPR004536">
    <property type="entry name" value="SPS/SelD"/>
</dbReference>
<dbReference type="NCBIfam" id="NF002098">
    <property type="entry name" value="PRK00943.1"/>
    <property type="match status" value="1"/>
</dbReference>
<dbReference type="NCBIfam" id="TIGR00476">
    <property type="entry name" value="selD"/>
    <property type="match status" value="1"/>
</dbReference>
<dbReference type="PANTHER" id="PTHR10256:SF0">
    <property type="entry name" value="INACTIVE SELENIDE, WATER DIKINASE-LIKE PROTEIN-RELATED"/>
    <property type="match status" value="1"/>
</dbReference>
<dbReference type="PANTHER" id="PTHR10256">
    <property type="entry name" value="SELENIDE, WATER DIKINASE"/>
    <property type="match status" value="1"/>
</dbReference>
<dbReference type="Pfam" id="PF00586">
    <property type="entry name" value="AIRS"/>
    <property type="match status" value="1"/>
</dbReference>
<dbReference type="Pfam" id="PF02769">
    <property type="entry name" value="AIRS_C"/>
    <property type="match status" value="1"/>
</dbReference>
<dbReference type="PIRSF" id="PIRSF036407">
    <property type="entry name" value="Selenphspht_syn"/>
    <property type="match status" value="1"/>
</dbReference>
<dbReference type="SUPFAM" id="SSF56042">
    <property type="entry name" value="PurM C-terminal domain-like"/>
    <property type="match status" value="1"/>
</dbReference>
<dbReference type="SUPFAM" id="SSF55326">
    <property type="entry name" value="PurM N-terminal domain-like"/>
    <property type="match status" value="1"/>
</dbReference>
<gene>
    <name evidence="1" type="primary">selD</name>
    <name type="ordered locus">SFV_1453</name>
</gene>
<reference key="1">
    <citation type="journal article" date="2006" name="BMC Genomics">
        <title>Complete genome sequence of Shigella flexneri 5b and comparison with Shigella flexneri 2a.</title>
        <authorList>
            <person name="Nie H."/>
            <person name="Yang F."/>
            <person name="Zhang X."/>
            <person name="Yang J."/>
            <person name="Chen L."/>
            <person name="Wang J."/>
            <person name="Xiong Z."/>
            <person name="Peng J."/>
            <person name="Sun L."/>
            <person name="Dong J."/>
            <person name="Xue Y."/>
            <person name="Xu X."/>
            <person name="Chen S."/>
            <person name="Yao Z."/>
            <person name="Shen Y."/>
            <person name="Jin Q."/>
        </authorList>
    </citation>
    <scope>NUCLEOTIDE SEQUENCE [LARGE SCALE GENOMIC DNA]</scope>
    <source>
        <strain>8401</strain>
    </source>
</reference>
<proteinExistence type="inferred from homology"/>
<feature type="chain" id="PRO_0000318660" description="Selenide, water dikinase">
    <location>
        <begin position="1"/>
        <end position="347"/>
    </location>
</feature>
<feature type="active site" evidence="1">
    <location>
        <position position="17"/>
    </location>
</feature>
<feature type="binding site" description="in other chain" evidence="1">
    <location>
        <position position="20"/>
    </location>
    <ligand>
        <name>ATP</name>
        <dbReference type="ChEBI" id="CHEBI:30616"/>
        <note>ligand shared between dimeric partners</note>
    </ligand>
</feature>
<feature type="binding site" description="in other chain" evidence="1">
    <location>
        <begin position="48"/>
        <end position="50"/>
    </location>
    <ligand>
        <name>ATP</name>
        <dbReference type="ChEBI" id="CHEBI:30616"/>
        <note>ligand shared between dimeric partners</note>
    </ligand>
</feature>
<feature type="binding site" evidence="1">
    <location>
        <position position="51"/>
    </location>
    <ligand>
        <name>Mg(2+)</name>
        <dbReference type="ChEBI" id="CHEBI:18420"/>
    </ligand>
</feature>
<feature type="binding site" description="in other chain" evidence="1">
    <location>
        <position position="68"/>
    </location>
    <ligand>
        <name>ATP</name>
        <dbReference type="ChEBI" id="CHEBI:30616"/>
        <note>ligand shared between dimeric partners</note>
    </ligand>
</feature>
<feature type="binding site" description="in other chain" evidence="1">
    <location>
        <position position="91"/>
    </location>
    <ligand>
        <name>ATP</name>
        <dbReference type="ChEBI" id="CHEBI:30616"/>
        <note>ligand shared between dimeric partners</note>
    </ligand>
</feature>
<feature type="binding site" evidence="1">
    <location>
        <position position="91"/>
    </location>
    <ligand>
        <name>Mg(2+)</name>
        <dbReference type="ChEBI" id="CHEBI:18420"/>
    </ligand>
</feature>
<feature type="binding site" evidence="1">
    <location>
        <begin position="139"/>
        <end position="141"/>
    </location>
    <ligand>
        <name>ATP</name>
        <dbReference type="ChEBI" id="CHEBI:30616"/>
        <note>ligand shared between dimeric partners</note>
    </ligand>
</feature>
<feature type="binding site" evidence="1">
    <location>
        <position position="227"/>
    </location>
    <ligand>
        <name>Mg(2+)</name>
        <dbReference type="ChEBI" id="CHEBI:18420"/>
    </ligand>
</feature>
<feature type="site" description="Important for catalytic activity" evidence="1">
    <location>
        <position position="20"/>
    </location>
</feature>